<comment type="function">
    <text evidence="1">May function as a substrate receptor for CUL4-DDB1 E3 ubiquitin-protein ligase complex.</text>
</comment>
<comment type="pathway">
    <text>Protein modification; protein ubiquitination.</text>
</comment>
<comment type="subunit">
    <text evidence="1">Interacts with DDB1 and CUL4A.</text>
</comment>
<comment type="sequence caution" evidence="4">
    <conflict type="frameshift">
        <sequence resource="EMBL-CDS" id="CAH92285"/>
    </conflict>
</comment>
<dbReference type="EMBL" id="CR857585">
    <property type="protein sequence ID" value="CAH89863.1"/>
    <property type="molecule type" value="mRNA"/>
</dbReference>
<dbReference type="EMBL" id="CR860141">
    <property type="protein sequence ID" value="CAH92285.1"/>
    <property type="status" value="ALT_FRAME"/>
    <property type="molecule type" value="mRNA"/>
</dbReference>
<dbReference type="RefSeq" id="NP_001126335.2">
    <property type="nucleotide sequence ID" value="NM_001132863.2"/>
</dbReference>
<dbReference type="RefSeq" id="NP_001128756.1">
    <property type="nucleotide sequence ID" value="NM_001135284.2"/>
</dbReference>
<dbReference type="RefSeq" id="XP_054385774.1">
    <property type="nucleotide sequence ID" value="XM_054529799.2"/>
</dbReference>
<dbReference type="RefSeq" id="XP_054385775.1">
    <property type="nucleotide sequence ID" value="XM_054529800.1"/>
</dbReference>
<dbReference type="SMR" id="Q5R7H5"/>
<dbReference type="FunCoup" id="Q5R7H5">
    <property type="interactions" value="1092"/>
</dbReference>
<dbReference type="STRING" id="9601.ENSPPYP00000006460"/>
<dbReference type="Ensembl" id="ENSPPYT00000006715.3">
    <property type="protein sequence ID" value="ENSPPYP00000006460.3"/>
    <property type="gene ID" value="ENSPPYG00000005680.3"/>
</dbReference>
<dbReference type="GeneID" id="100173316"/>
<dbReference type="KEGG" id="pon:100173316"/>
<dbReference type="CTD" id="80344"/>
<dbReference type="eggNOG" id="KOG0266">
    <property type="taxonomic scope" value="Eukaryota"/>
</dbReference>
<dbReference type="GeneTree" id="ENSGT00720000108873"/>
<dbReference type="HOGENOM" id="CLU_014280_3_1_1"/>
<dbReference type="InParanoid" id="Q5R7H5"/>
<dbReference type="OMA" id="EHTFPQM"/>
<dbReference type="OrthoDB" id="63070at2759"/>
<dbReference type="UniPathway" id="UPA00143"/>
<dbReference type="Proteomes" id="UP000001595">
    <property type="component" value="Chromosome 14"/>
</dbReference>
<dbReference type="GO" id="GO:0080008">
    <property type="term" value="C:Cul4-RING E3 ubiquitin ligase complex"/>
    <property type="evidence" value="ECO:0000250"/>
    <property type="project" value="UniProtKB"/>
</dbReference>
<dbReference type="GO" id="GO:0005654">
    <property type="term" value="C:nucleoplasm"/>
    <property type="evidence" value="ECO:0007669"/>
    <property type="project" value="Ensembl"/>
</dbReference>
<dbReference type="GO" id="GO:0035640">
    <property type="term" value="P:exploration behavior"/>
    <property type="evidence" value="ECO:0007669"/>
    <property type="project" value="Ensembl"/>
</dbReference>
<dbReference type="GO" id="GO:0010467">
    <property type="term" value="P:gene expression"/>
    <property type="evidence" value="ECO:0007669"/>
    <property type="project" value="Ensembl"/>
</dbReference>
<dbReference type="GO" id="GO:0007613">
    <property type="term" value="P:memory"/>
    <property type="evidence" value="ECO:0007669"/>
    <property type="project" value="Ensembl"/>
</dbReference>
<dbReference type="GO" id="GO:0043161">
    <property type="term" value="P:proteasome-mediated ubiquitin-dependent protein catabolic process"/>
    <property type="evidence" value="ECO:0007669"/>
    <property type="project" value="TreeGrafter"/>
</dbReference>
<dbReference type="GO" id="GO:0050821">
    <property type="term" value="P:protein stabilization"/>
    <property type="evidence" value="ECO:0007669"/>
    <property type="project" value="Ensembl"/>
</dbReference>
<dbReference type="GO" id="GO:0016567">
    <property type="term" value="P:protein ubiquitination"/>
    <property type="evidence" value="ECO:0007669"/>
    <property type="project" value="UniProtKB-UniPathway"/>
</dbReference>
<dbReference type="GO" id="GO:0003016">
    <property type="term" value="P:respiratory system process"/>
    <property type="evidence" value="ECO:0007669"/>
    <property type="project" value="Ensembl"/>
</dbReference>
<dbReference type="GO" id="GO:0006979">
    <property type="term" value="P:response to oxidative stress"/>
    <property type="evidence" value="ECO:0007669"/>
    <property type="project" value="Ensembl"/>
</dbReference>
<dbReference type="FunFam" id="2.130.10.10:FF:002187">
    <property type="entry name" value="DDB1 and CUL4 associated factor 11"/>
    <property type="match status" value="1"/>
</dbReference>
<dbReference type="FunFam" id="2.130.10.10:FF:000115">
    <property type="entry name" value="DDB1- and CUL4-associated factor 11 isoform X1"/>
    <property type="match status" value="1"/>
</dbReference>
<dbReference type="Gene3D" id="2.130.10.10">
    <property type="entry name" value="YVTN repeat-like/Quinoprotein amine dehydrogenase"/>
    <property type="match status" value="2"/>
</dbReference>
<dbReference type="InterPro" id="IPR051859">
    <property type="entry name" value="DCAF"/>
</dbReference>
<dbReference type="InterPro" id="IPR017399">
    <property type="entry name" value="DCAF11/LEC14B"/>
</dbReference>
<dbReference type="InterPro" id="IPR020472">
    <property type="entry name" value="G-protein_beta_WD-40_rep"/>
</dbReference>
<dbReference type="InterPro" id="IPR015943">
    <property type="entry name" value="WD40/YVTN_repeat-like_dom_sf"/>
</dbReference>
<dbReference type="InterPro" id="IPR036322">
    <property type="entry name" value="WD40_repeat_dom_sf"/>
</dbReference>
<dbReference type="InterPro" id="IPR001680">
    <property type="entry name" value="WD40_rpt"/>
</dbReference>
<dbReference type="PANTHER" id="PTHR19847">
    <property type="entry name" value="DDB1- AND CUL4-ASSOCIATED FACTOR 11"/>
    <property type="match status" value="1"/>
</dbReference>
<dbReference type="PANTHER" id="PTHR19847:SF7">
    <property type="entry name" value="DDB1- AND CUL4-ASSOCIATED FACTOR 11"/>
    <property type="match status" value="1"/>
</dbReference>
<dbReference type="Pfam" id="PF00400">
    <property type="entry name" value="WD40"/>
    <property type="match status" value="4"/>
</dbReference>
<dbReference type="PIRSF" id="PIRSF038135">
    <property type="entry name" value="WD_repeat_p23"/>
    <property type="match status" value="1"/>
</dbReference>
<dbReference type="PRINTS" id="PR00320">
    <property type="entry name" value="GPROTEINBRPT"/>
</dbReference>
<dbReference type="SMART" id="SM00320">
    <property type="entry name" value="WD40"/>
    <property type="match status" value="7"/>
</dbReference>
<dbReference type="SUPFAM" id="SSF50978">
    <property type="entry name" value="WD40 repeat-like"/>
    <property type="match status" value="1"/>
</dbReference>
<dbReference type="PROSITE" id="PS50082">
    <property type="entry name" value="WD_REPEATS_2"/>
    <property type="match status" value="3"/>
</dbReference>
<dbReference type="PROSITE" id="PS50294">
    <property type="entry name" value="WD_REPEATS_REGION"/>
    <property type="match status" value="1"/>
</dbReference>
<name>DCA11_PONAB</name>
<sequence>MGSRNSSSAGSGSGDPSEGLTRRGAGLRRSEEEEEEDEDVDLAQVLAYLLRRGQVRLVQGGGAANLQFIQALLDSEEENDRAWDGRLGDRYNPPVDATPDTRELECNEIKTQVELATGQLGLRRAAQKHSFPRMLHQRERGLCHRGSFSLGEQSRVISHFLPNDLGFTDSYSQKAFCGIYSKDGQIFMSACQDQTIRLYDCRYGRFRKFKSIKARDVGWSVLDVAFTPDGSHFLYSSWSDYIHICNIYGEGDTHTALDLRPDERRFAVFSIAVSSDGREVLGGANDGCLYVFDREQNRRTLQIESHEDDVNAVAFADISSQILFSGGDDAICKVWDRRTMREDDPKPVGALAGHQDGITFIDSKGDARYLISNSKDQTIKLWDIRRFSSREGMEASRQAATQQNWDYRWQQVPKKAWRKLKLPGDSSLMTYRGHGVLHTLIRCRFSPIHSTGQQFIYSGCSTGKVVVYDLLSGHIVKKLTNHKACVRDVSWHPFEEKIVSSSWDGNLRLWQYRQAEYFQDDMPESEECASAPAPVPRSSTPFSSPQ</sequence>
<gene>
    <name type="primary">DCAF11</name>
    <name type="synonym">WDR23</name>
</gene>
<protein>
    <recommendedName>
        <fullName>DDB1- and CUL4-associated factor 11</fullName>
    </recommendedName>
    <alternativeName>
        <fullName>WD repeat-containing protein 23</fullName>
    </alternativeName>
</protein>
<proteinExistence type="evidence at transcript level"/>
<organism>
    <name type="scientific">Pongo abelii</name>
    <name type="common">Sumatran orangutan</name>
    <name type="synonym">Pongo pygmaeus abelii</name>
    <dbReference type="NCBI Taxonomy" id="9601"/>
    <lineage>
        <taxon>Eukaryota</taxon>
        <taxon>Metazoa</taxon>
        <taxon>Chordata</taxon>
        <taxon>Craniata</taxon>
        <taxon>Vertebrata</taxon>
        <taxon>Euteleostomi</taxon>
        <taxon>Mammalia</taxon>
        <taxon>Eutheria</taxon>
        <taxon>Euarchontoglires</taxon>
        <taxon>Primates</taxon>
        <taxon>Haplorrhini</taxon>
        <taxon>Catarrhini</taxon>
        <taxon>Hominidae</taxon>
        <taxon>Pongo</taxon>
    </lineage>
</organism>
<accession>Q5R7H5</accession>
<accession>Q5REE4</accession>
<keyword id="KW-0597">Phosphoprotein</keyword>
<keyword id="KW-1185">Reference proteome</keyword>
<keyword id="KW-0677">Repeat</keyword>
<keyword id="KW-0833">Ubl conjugation pathway</keyword>
<keyword id="KW-0853">WD repeat</keyword>
<reference key="1">
    <citation type="submission" date="2004-11" db="EMBL/GenBank/DDBJ databases">
        <authorList>
            <consortium name="The German cDNA consortium"/>
        </authorList>
    </citation>
    <scope>NUCLEOTIDE SEQUENCE [LARGE SCALE MRNA]</scope>
    <source>
        <tissue>Brain cortex</tissue>
        <tissue>Kidney</tissue>
    </source>
</reference>
<feature type="chain" id="PRO_0000373803" description="DDB1- and CUL4-associated factor 11">
    <location>
        <begin position="1"/>
        <end position="546"/>
    </location>
</feature>
<feature type="repeat" description="WD 1">
    <location>
        <begin position="170"/>
        <end position="210"/>
    </location>
</feature>
<feature type="repeat" description="WD 2">
    <location>
        <begin position="216"/>
        <end position="258"/>
    </location>
</feature>
<feature type="repeat" description="WD 3">
    <location>
        <begin position="263"/>
        <end position="302"/>
    </location>
</feature>
<feature type="repeat" description="WD 4">
    <location>
        <begin position="305"/>
        <end position="345"/>
    </location>
</feature>
<feature type="repeat" description="WD 5">
    <location>
        <begin position="353"/>
        <end position="392"/>
    </location>
</feature>
<feature type="repeat" description="WD 6">
    <location>
        <begin position="435"/>
        <end position="480"/>
    </location>
</feature>
<feature type="repeat" description="WD 7">
    <location>
        <begin position="481"/>
        <end position="520"/>
    </location>
</feature>
<feature type="region of interest" description="Disordered" evidence="3">
    <location>
        <begin position="1"/>
        <end position="40"/>
    </location>
</feature>
<feature type="region of interest" description="Disordered" evidence="3">
    <location>
        <begin position="523"/>
        <end position="546"/>
    </location>
</feature>
<feature type="compositionally biased region" description="Low complexity" evidence="3">
    <location>
        <begin position="1"/>
        <end position="19"/>
    </location>
</feature>
<feature type="compositionally biased region" description="Polar residues" evidence="3">
    <location>
        <begin position="537"/>
        <end position="546"/>
    </location>
</feature>
<feature type="modified residue" description="Phosphoserine" evidence="2">
    <location>
        <position position="75"/>
    </location>
</feature>
<evidence type="ECO:0000250" key="1"/>
<evidence type="ECO:0000250" key="2">
    <source>
        <dbReference type="UniProtKB" id="Q91VU6"/>
    </source>
</evidence>
<evidence type="ECO:0000256" key="3">
    <source>
        <dbReference type="SAM" id="MobiDB-lite"/>
    </source>
</evidence>
<evidence type="ECO:0000305" key="4"/>